<sequence length="1706" mass="186874">MAARNSLTPQQGLGFFGLLILLCSAVLGKSQMCEVETGQTNIILDIEESRESFIGQPTTPPELPIFGDPDTEIALNLVFPKGQPIFQLNGKKLQLLQPLDRDEENLSHIVFQVSCTTRSTGKKRTIPIIVRVSDINDNAPRFMNTPYEVTVPESTPVGTTIFRNIQALDKDAGVNGLVEYFIAEGSPNSTNVEKYSADGYGTFAISFPHQGQVTVAKTLDFEKIQTYYLTIVASDRARNTADRLSSTTTLTVNIADSNDLDPSFIYSGCVSLDGACINPEYSASVPAGSLLGVLTVLPERIQAVDLDTINSPIRYSFASGMPGNYADYFQIDESTGVLKQTKAVDTSTAKKYDIIVKAEEVSPGPQRFTTAKLEIFVKPVDANPPVISSSQAEGYVDENSPIGTRVLDAHGNPISFMTTDADLSDSDPKPDYIYELTTPSFNVTGDGILVVNEENLDRDPPAPGRFKFQVVAREPRTNAASAPLSLTVHLRDVNDNAPKLAMVAPISITAGDQSESRLVTQVTATDNDEGPNAVVTYSIYHVSNNGIQKFTINATTGEIRTQGRLLAGEQYSITVQATDIGGLSSQAIVEVSVTPGPNTKPPRFQKPIYEVQVSEGAEINSTVTVVHAEDPENDAVVYSIISGNDLRQFAVGQESGVIIVIRKLDRESLTRYQLILKAEDTGGLSSSATVNIKVTDINDKNPEFEASTLPYVFQVEEGKAQASVGVVHATDADEGINAEITYSIPTDIPFTINATSGEILTAKELDYEQLNEYKFVVTAKDGAPDARLGTASVTVMVLDLPDEVPKFSDARIDVHIPENEENFLVATVQAFDPDSMPEITYVLRKGNAELFKVSEKSGEVRTIKGLDYESQKQHQLTIGTIENDGNGPGDTILLVVDVEDRNDLPPRFITVPDPVTVNDDQGIGTIIATLPAIDGDGTSPGNVVRYEIVGRGKAPKYFQVDPDTGAVRIRDELRKEEDTEYQVDIRAYDLGEPQLSSVAPLRVDVHHLLSSGNNEIKLDNKLESGTGMSSESIGLAFSDDSYTTSVPESMEANSTLKLIQIVNSKTSGDGPPAFRCEFVSGNGGGIFNLSSADHGCNLLLIQPLDFENKSSYSLQLRLTSHRYFVNPLKDTTSVEIIVQDENDNAPEFEFNRLRGQQDTFYTVVTEEMDVDTTILQVRATDRDSGKFGTVRYTLYDDDENRVNMPTSFFMMSEDTGVLRTAKHFKNENDFPLTFLVEARDSDGQEQGSHRTRARIVVNKLADINRMALSFPNAAPSDLRNYYTELEELLDKKTGLVSGIERMSSQKYLAKNGSVIENPAATDIWFYLIDPKTEQLVSRKDSIVETTLLEPAARSELNIALPRATAENISFPLERKEHVHKVKAAVAIDNEVFPFTLIAISLVILILGTIGIIYICISWSKYKNFKQRMRQYSSTNPPRYDPVIVNQQASSASETIANMKEYETQMLAMAVPPDVDDDLQLDFSAKNHAFSLDNVSYITHKENTNGGGQSSPSHSDATTATIATLRRHKNLNNASMNNNLAINNRQNTFNRTLEMNTRNNANPLASPPNGALSGTLTLGRIKHQNSNHYQNGAYNIDPTGPNNMAHAKNNAYSTMGRRGNTFGDVGLLNGNGELMNATLGRNGQLNNRLYGGEVPITNPLFQRSNSDHNHLSSTNENVSFGKRDYGQIGFSYLNDLDRSEVETTTEL</sequence>
<accession>Q9VAF5</accession>
<accession>Q5D716</accession>
<accession>Q5U133</accession>
<accession>Q961C6</accession>
<accession>Q9VAF6</accession>
<proteinExistence type="evidence at protein level"/>
<comment type="function">
    <text evidence="6 7 8 9 10">Cadherin that functions in epithelial morphogenesis and the intestine epithelial immune response (PubMed:16260500, PubMed:16507588, PubMed:24718992, PubMed:25639794). Essential for female fertility (PubMed:16260500, PubMed:16507588). Regulates the length and organization of apical microvilli in developing follicle cells and salivary glands (PubMed:16260500, PubMed:16507588, PubMed:24718992, PubMed:25236597). Function in the follicle cell is essential for egg development as the microvilli secrete eggshell material such as the vitelline membrane (PubMed:16260500, PubMed:16507588, PubMed:25236597). Acts at least in part by regulating the recruitment of the myosin ck to the follicle cell microvilli (PubMed:25236597). Also required to regulate cell rearrangements during salivary tube elongation, possibly by modulating cellular adhesion between the apical surface and apical extracellular matrix during epithelial tube elongation (PubMed:24718992). May also function in cellular adhesion during the development of other tubular epithelia such as the trachea (PubMed:24718992). Possibly functions as an apical membrane determinant which acts in apical membrane expansion during salivary and tracheal epithelial tube elongation (PubMed:24718992). In salivary gland development, this function is independent of the other apical membrane determinants crb and sas (PubMed:24718992). Essential downstream component of a hh-signaling pathway which regulates the Duox-dependent gut epithelial immune response to bacterial uracil; required for endosome formation in the enterocyte and activating norpA-dependent Ca2+ mobilization, which are essential steps in the Duox-dependent production of reactive oxygen species (ROS) in response to intestinal bacterial infection (PubMed:25639794).</text>
</comment>
<comment type="subunit">
    <text evidence="9 11">Interacts (via the cytoplasmic domain) with ck (PubMed:25236597, PubMed:27331610). Interacts (via the cytoplasmic domain) with Cul1 and Ubr3 (PubMed:27331610).</text>
</comment>
<comment type="interaction">
    <interactant intactId="EBI-187019">
        <id>Q9VAF5</id>
    </interactant>
    <interactant intactId="EBI-15762145">
        <id>Q9V3Z6</id>
        <label>ck</label>
    </interactant>
    <organismsDiffer>false</organismsDiffer>
    <experiments>5</experiments>
</comment>
<comment type="subcellular location">
    <subcellularLocation>
        <location evidence="6 7">Apical cell membrane</location>
        <topology evidence="2">Single-pass type I membrane protein</topology>
    </subcellularLocation>
    <subcellularLocation>
        <location evidence="10">Endosome membrane</location>
        <topology evidence="2">Single-pass type I membrane protein</topology>
    </subcellularLocation>
    <subcellularLocation>
        <location evidence="6 7 10">Cell projection</location>
        <location evidence="6 7 10">Microvillus membrane</location>
        <topology evidence="2">Single-pass type I membrane protein</topology>
    </subcellularLocation>
    <text evidence="10">Dispersed throughout the enterocyte membrane, but becomes clustered in the brush border membrane in response to uracil.</text>
</comment>
<comment type="developmental stage">
    <text evidence="5 6 7 8">Low expression throughout the imaginal disks of third instar larvae with higher levels of expression at the anterior-posterior boundary (at protein level) (PubMed:15708564). Detected in the germarium and stage 2 and stage 3 egg chambers (at protein level) (PubMed:16507588). From stages 2 to 8, expressed in the follicle cells at the anterior and posterior poles of the egg chambers (at protein level) (PubMed:16260500, PubMed:16507588). From stage 4 to the end of oogenesis, only detected in follicle cells that are in contact with the oocyte (at protein level) (PubMed:16260500, PubMed:16507588). From stage 11 expressed at the apical surface of several embryonic tubular organs including the salivary glands, trachea, foregut and hindgut (PubMed:24718992).</text>
</comment>
<comment type="induction">
    <text evidence="10">Up-regulated in the adult anterior midgut after the ingestion of bacterial uracil. Strong up-regulation detected 1 hour, 2 hours and 16 hours after ingestion, whereas no up-regulation was detected at 4 hours.</text>
</comment>
<comment type="domain">
    <text evidence="6 7 8">The extracellular domain is necessary for conferring apical characteristics on the salivary gland membrane (PubMed:24718992). Necessary for regulating salivary gland membrane expansion and tube length, but is not required for cell rearrangement during tube elongation (PubMed:24718992). Sufficient to promote the outgrowth of follicle cell microvilli and the formation of microvilli bundles (PubMed:16260500, PubMed:24718992) Sufficient to promote formation of microvilli-like structures in the salivary glands and the follicle cell microvilli bundles (PubMed:16507588, PubMed:24718992). Dispensable for apical localization (PubMed:24718992).</text>
</comment>
<comment type="domain">
    <text evidence="10">The cytoplasmic domain is necessary for the formation of uracil-induced endosomes.</text>
</comment>
<comment type="domain">
    <text evidence="1">Three calcium ions are usually bound at the interface of each cadherin domain and rigidify the connections, imparting a strong curvature to the full-length ectodomain (By similarity).</text>
</comment>
<comment type="disruption phenotype">
    <text evidence="6 7 8 10">Females display reduced fertility as well as defective eggshell development (PubMed:16260500). Ovarian follicle cell microvilli are abnormally shaped and display a range of defects including decreased length, reduced number and an irregular distribution pattern, leading to impaired vitelline membrane formation (PubMed:16260500, PubMed:16507588). In the intestines of 3-day old adults there is no formation of endosomes and consequently no DUOX-dependent up-regulation of reactive oxygen species (ROS) in response to the ingestion of bacteria-derived uracil (PubMed:25639794). Embryos display irregular cell rearrangements during salivary gland development with fewer cells surrounding the salivary gland lumens and lumens appear to be elongated (PubMed:24718992).</text>
</comment>
<protein>
    <recommendedName>
        <fullName evidence="12">Cadherin-99C</fullName>
    </recommendedName>
</protein>
<feature type="signal peptide" evidence="2">
    <location>
        <begin position="1"/>
        <end position="28"/>
    </location>
</feature>
<feature type="chain" id="PRO_5008180598" description="Cadherin-99C" evidence="2">
    <location>
        <begin position="29"/>
        <end position="1706"/>
    </location>
</feature>
<feature type="topological domain" description="Extracellular" evidence="13">
    <location>
        <begin position="29"/>
        <end position="1395"/>
    </location>
</feature>
<feature type="transmembrane region" description="Helical" evidence="2">
    <location>
        <begin position="1396"/>
        <end position="1416"/>
    </location>
</feature>
<feature type="topological domain" description="Cytoplasmic" evidence="13">
    <location>
        <begin position="1417"/>
        <end position="1706"/>
    </location>
</feature>
<feature type="domain" description="Cadherin 1" evidence="3">
    <location>
        <begin position="68"/>
        <end position="142"/>
    </location>
</feature>
<feature type="domain" description="Cadherin 2" evidence="3">
    <location>
        <begin position="143"/>
        <end position="264"/>
    </location>
</feature>
<feature type="domain" description="Cadherin 3" evidence="3">
    <location>
        <begin position="277"/>
        <end position="387"/>
    </location>
</feature>
<feature type="domain" description="Cadherin 4" evidence="3">
    <location>
        <begin position="388"/>
        <end position="500"/>
    </location>
</feature>
<feature type="domain" description="Cadherin 5" evidence="3">
    <location>
        <begin position="519"/>
        <end position="604"/>
    </location>
</feature>
<feature type="domain" description="Cadherin 6" evidence="3">
    <location>
        <begin position="605"/>
        <end position="704"/>
    </location>
</feature>
<feature type="domain" description="Cadherin 7" evidence="3">
    <location>
        <begin position="707"/>
        <end position="807"/>
    </location>
</feature>
<feature type="domain" description="Cadherin 8" evidence="3">
    <location>
        <begin position="808"/>
        <end position="908"/>
    </location>
</feature>
<feature type="domain" description="Cadherin 9" evidence="3">
    <location>
        <begin position="909"/>
        <end position="1005"/>
    </location>
</feature>
<feature type="domain" description="Cadherin 10" evidence="3">
    <location>
        <begin position="1038"/>
        <end position="1148"/>
    </location>
</feature>
<feature type="domain" description="Cadherin 11" evidence="3">
    <location>
        <begin position="1156"/>
        <end position="1270"/>
    </location>
</feature>
<feature type="glycosylation site" description="N-linked (GlcNAc...) asparagine" evidence="4">
    <location>
        <position position="105"/>
    </location>
</feature>
<feature type="glycosylation site" description="N-linked (GlcNAc...) asparagine" evidence="4">
    <location>
        <position position="188"/>
    </location>
</feature>
<feature type="glycosylation site" description="N-linked (GlcNAc...) asparagine" evidence="4">
    <location>
        <position position="442"/>
    </location>
</feature>
<feature type="glycosylation site" description="N-linked (GlcNAc...) asparagine" evidence="4">
    <location>
        <position position="553"/>
    </location>
</feature>
<feature type="glycosylation site" description="N-linked (GlcNAc...) asparagine" evidence="4">
    <location>
        <position position="620"/>
    </location>
</feature>
<feature type="glycosylation site" description="N-linked (GlcNAc...) asparagine" evidence="4">
    <location>
        <position position="753"/>
    </location>
</feature>
<feature type="glycosylation site" description="N-linked (GlcNAc...) asparagine" evidence="4">
    <location>
        <position position="1053"/>
    </location>
</feature>
<feature type="glycosylation site" description="N-linked (GlcNAc...) asparagine" evidence="4">
    <location>
        <position position="1088"/>
    </location>
</feature>
<feature type="glycosylation site" description="N-linked (GlcNAc...) asparagine" evidence="4">
    <location>
        <position position="1108"/>
    </location>
</feature>
<feature type="glycosylation site" description="N-linked (GlcNAc...) asparagine" evidence="4">
    <location>
        <position position="1311"/>
    </location>
</feature>
<feature type="glycosylation site" description="N-linked (GlcNAc...) asparagine" evidence="4">
    <location>
        <position position="1367"/>
    </location>
</feature>
<feature type="sequence conflict" description="In Ref. 1; AAX12106/AAX12107." evidence="13" ref="1">
    <original>P</original>
    <variation>A</variation>
    <location>
        <position position="61"/>
    </location>
</feature>
<feature type="sequence conflict" description="In Ref. 1; AAX12106/AAX12107." evidence="13" ref="1">
    <original>V</original>
    <variation>I</variation>
    <location>
        <position position="853"/>
    </location>
</feature>
<feature type="sequence conflict" description="In Ref. 1; AAX12106/AAX12107." evidence="13" ref="1">
    <original>G</original>
    <variation>E</variation>
    <location>
        <position position="1083"/>
    </location>
</feature>
<feature type="sequence conflict" description="In Ref. 1; AAX12106/AAX12107." evidence="13" ref="1">
    <original>K</original>
    <variation>R</variation>
    <location>
        <position position="1331"/>
    </location>
</feature>
<keyword id="KW-0106">Calcium</keyword>
<keyword id="KW-1003">Cell membrane</keyword>
<keyword id="KW-0966">Cell projection</keyword>
<keyword id="KW-0967">Endosome</keyword>
<keyword id="KW-0325">Glycoprotein</keyword>
<keyword id="KW-0391">Immunity</keyword>
<keyword id="KW-0472">Membrane</keyword>
<keyword id="KW-1185">Reference proteome</keyword>
<keyword id="KW-0677">Repeat</keyword>
<keyword id="KW-0732">Signal</keyword>
<keyword id="KW-0812">Transmembrane</keyword>
<keyword id="KW-1133">Transmembrane helix</keyword>
<dbReference type="EMBL" id="AY853687">
    <property type="protein sequence ID" value="AAX12107.1"/>
    <property type="molecule type" value="mRNA"/>
</dbReference>
<dbReference type="EMBL" id="AY853686">
    <property type="protein sequence ID" value="AAX12106.1"/>
    <property type="molecule type" value="mRNA"/>
</dbReference>
<dbReference type="EMBL" id="AE014297">
    <property type="protein sequence ID" value="AAF56955.2"/>
    <property type="molecule type" value="Genomic_DNA"/>
</dbReference>
<dbReference type="EMBL" id="AE014297">
    <property type="protein sequence ID" value="ADV37401.1"/>
    <property type="molecule type" value="Genomic_DNA"/>
</dbReference>
<dbReference type="EMBL" id="BT016059">
    <property type="protein sequence ID" value="AAV36944.1"/>
    <property type="molecule type" value="mRNA"/>
</dbReference>
<dbReference type="RefSeq" id="NP_001189311.1">
    <property type="nucleotide sequence ID" value="NM_001202382.1"/>
</dbReference>
<dbReference type="RefSeq" id="NP_733314.1">
    <property type="nucleotide sequence ID" value="NM_170435.2"/>
</dbReference>
<dbReference type="SMR" id="Q9VAF5"/>
<dbReference type="FunCoup" id="Q9VAF5">
    <property type="interactions" value="134"/>
</dbReference>
<dbReference type="IntAct" id="Q9VAF5">
    <property type="interactions" value="3"/>
</dbReference>
<dbReference type="STRING" id="7227.FBpp0084854"/>
<dbReference type="GlyCosmos" id="Q9VAF5">
    <property type="glycosylation" value="11 sites, No reported glycans"/>
</dbReference>
<dbReference type="GlyGen" id="Q9VAF5">
    <property type="glycosylation" value="12 sites"/>
</dbReference>
<dbReference type="PaxDb" id="7227-FBpp0292214"/>
<dbReference type="EnsemblMetazoa" id="FBtr0085488">
    <property type="protein sequence ID" value="FBpp0084854"/>
    <property type="gene ID" value="FBgn0039709"/>
</dbReference>
<dbReference type="EnsemblMetazoa" id="FBtr0303095">
    <property type="protein sequence ID" value="FBpp0292214"/>
    <property type="gene ID" value="FBgn0039709"/>
</dbReference>
<dbReference type="GeneID" id="43528"/>
<dbReference type="KEGG" id="dme:Dmel_CG31009"/>
<dbReference type="UCSC" id="CG31009-RA">
    <property type="organism name" value="d. melanogaster"/>
</dbReference>
<dbReference type="AGR" id="FB:FBgn0039709"/>
<dbReference type="CTD" id="43528"/>
<dbReference type="FlyBase" id="FBgn0039709">
    <property type="gene designation" value="Cad99C"/>
</dbReference>
<dbReference type="VEuPathDB" id="VectorBase:FBgn0039709"/>
<dbReference type="eggNOG" id="KOG3594">
    <property type="taxonomic scope" value="Eukaryota"/>
</dbReference>
<dbReference type="HOGENOM" id="CLU_003665_0_0_1"/>
<dbReference type="InParanoid" id="Q9VAF5"/>
<dbReference type="OMA" id="NNMANAK"/>
<dbReference type="OrthoDB" id="10029135at2759"/>
<dbReference type="PhylomeDB" id="Q9VAF5"/>
<dbReference type="SignaLink" id="Q9VAF5"/>
<dbReference type="BioGRID-ORCS" id="43528">
    <property type="hits" value="0 hits in 1 CRISPR screen"/>
</dbReference>
<dbReference type="GenomeRNAi" id="43528"/>
<dbReference type="PRO" id="PR:Q9VAF5"/>
<dbReference type="Proteomes" id="UP000000803">
    <property type="component" value="Chromosome 3R"/>
</dbReference>
<dbReference type="Bgee" id="FBgn0039709">
    <property type="expression patterns" value="Expressed in polar follicle cell (Drosophila) in post-embryonic organism and 42 other cell types or tissues"/>
</dbReference>
<dbReference type="ExpressionAtlas" id="Q9VAF5">
    <property type="expression patterns" value="baseline and differential"/>
</dbReference>
<dbReference type="GO" id="GO:0016324">
    <property type="term" value="C:apical plasma membrane"/>
    <property type="evidence" value="ECO:0000314"/>
    <property type="project" value="FlyBase"/>
</dbReference>
<dbReference type="GO" id="GO:0010008">
    <property type="term" value="C:endosome membrane"/>
    <property type="evidence" value="ECO:0007669"/>
    <property type="project" value="UniProtKB-SubCell"/>
</dbReference>
<dbReference type="GO" id="GO:0005902">
    <property type="term" value="C:microvillus"/>
    <property type="evidence" value="ECO:0000314"/>
    <property type="project" value="FlyBase"/>
</dbReference>
<dbReference type="GO" id="GO:0031528">
    <property type="term" value="C:microvillus membrane"/>
    <property type="evidence" value="ECO:0007669"/>
    <property type="project" value="UniProtKB-SubCell"/>
</dbReference>
<dbReference type="GO" id="GO:0005886">
    <property type="term" value="C:plasma membrane"/>
    <property type="evidence" value="ECO:0000250"/>
    <property type="project" value="FlyBase"/>
</dbReference>
<dbReference type="GO" id="GO:0005509">
    <property type="term" value="F:calcium ion binding"/>
    <property type="evidence" value="ECO:0000255"/>
    <property type="project" value="FlyBase"/>
</dbReference>
<dbReference type="GO" id="GO:0017022">
    <property type="term" value="F:myosin binding"/>
    <property type="evidence" value="ECO:0000353"/>
    <property type="project" value="FlyBase"/>
</dbReference>
<dbReference type="GO" id="GO:0045176">
    <property type="term" value="P:apical protein localization"/>
    <property type="evidence" value="ECO:0000315"/>
    <property type="project" value="FlyBase"/>
</dbReference>
<dbReference type="GO" id="GO:0016339">
    <property type="term" value="P:calcium-dependent cell-cell adhesion via plasma membrane cell adhesion molecules"/>
    <property type="evidence" value="ECO:0000250"/>
    <property type="project" value="FlyBase"/>
</dbReference>
<dbReference type="GO" id="GO:0019722">
    <property type="term" value="P:calcium-mediated signaling"/>
    <property type="evidence" value="ECO:0000316"/>
    <property type="project" value="FlyBase"/>
</dbReference>
<dbReference type="GO" id="GO:0098609">
    <property type="term" value="P:cell-cell adhesion"/>
    <property type="evidence" value="ECO:0000318"/>
    <property type="project" value="GO_Central"/>
</dbReference>
<dbReference type="GO" id="GO:0044331">
    <property type="term" value="P:cell-cell adhesion mediated by cadherin"/>
    <property type="evidence" value="ECO:0000255"/>
    <property type="project" value="FlyBase"/>
</dbReference>
<dbReference type="GO" id="GO:0007304">
    <property type="term" value="P:chorion-containing eggshell formation"/>
    <property type="evidence" value="ECO:0000315"/>
    <property type="project" value="FlyBase"/>
</dbReference>
<dbReference type="GO" id="GO:0032529">
    <property type="term" value="P:follicle cell microvillus organization"/>
    <property type="evidence" value="ECO:0000315"/>
    <property type="project" value="FlyBase"/>
</dbReference>
<dbReference type="GO" id="GO:0007156">
    <property type="term" value="P:homophilic cell adhesion via plasma membrane adhesion molecules"/>
    <property type="evidence" value="ECO:0007669"/>
    <property type="project" value="InterPro"/>
</dbReference>
<dbReference type="GO" id="GO:0002385">
    <property type="term" value="P:mucosal immune response"/>
    <property type="evidence" value="ECO:0000315"/>
    <property type="project" value="FlyBase"/>
</dbReference>
<dbReference type="GO" id="GO:2000370">
    <property type="term" value="P:positive regulation of clathrin-dependent endocytosis"/>
    <property type="evidence" value="ECO:0000315"/>
    <property type="project" value="FlyBase"/>
</dbReference>
<dbReference type="GO" id="GO:0032533">
    <property type="term" value="P:regulation of follicle cell microvillus length"/>
    <property type="evidence" value="ECO:0000315"/>
    <property type="project" value="FlyBase"/>
</dbReference>
<dbReference type="GO" id="GO:0007605">
    <property type="term" value="P:sensory perception of sound"/>
    <property type="evidence" value="ECO:0000315"/>
    <property type="project" value="FlyBase"/>
</dbReference>
<dbReference type="GO" id="GO:0035239">
    <property type="term" value="P:tube morphogenesis"/>
    <property type="evidence" value="ECO:0000315"/>
    <property type="project" value="FlyBase"/>
</dbReference>
<dbReference type="GO" id="GO:0007305">
    <property type="term" value="P:vitelline membrane formation involved in chorion-containing eggshell formation"/>
    <property type="evidence" value="ECO:0000315"/>
    <property type="project" value="FlyBase"/>
</dbReference>
<dbReference type="CDD" id="cd11304">
    <property type="entry name" value="Cadherin_repeat"/>
    <property type="match status" value="11"/>
</dbReference>
<dbReference type="FunFam" id="2.60.40.60:FF:000315">
    <property type="entry name" value="CaDHerin family"/>
    <property type="match status" value="1"/>
</dbReference>
<dbReference type="FunFam" id="2.60.40.60:FF:000444">
    <property type="entry name" value="Cadherin-99C"/>
    <property type="match status" value="1"/>
</dbReference>
<dbReference type="FunFam" id="2.60.40.60:FF:000363">
    <property type="entry name" value="Dachsous cadherin-related 1a"/>
    <property type="match status" value="1"/>
</dbReference>
<dbReference type="FunFam" id="2.60.40.60:FF:000020">
    <property type="entry name" value="Dachsous cadherin-related 1b"/>
    <property type="match status" value="1"/>
</dbReference>
<dbReference type="FunFam" id="2.60.40.60:FF:000356">
    <property type="entry name" value="Protocadherin 15"/>
    <property type="match status" value="1"/>
</dbReference>
<dbReference type="FunFam" id="2.60.40.60:FF:000381">
    <property type="entry name" value="Protocadherin 15"/>
    <property type="match status" value="1"/>
</dbReference>
<dbReference type="FunFam" id="2.60.40.60:FF:000403">
    <property type="entry name" value="Protocadherin 15"/>
    <property type="match status" value="1"/>
</dbReference>
<dbReference type="FunFam" id="2.60.40.60:FF:000338">
    <property type="entry name" value="Protocadherin-15"/>
    <property type="match status" value="1"/>
</dbReference>
<dbReference type="FunFam" id="2.60.40.60:FF:000262">
    <property type="entry name" value="protocadherin-23 isoform X2"/>
    <property type="match status" value="1"/>
</dbReference>
<dbReference type="FunFam" id="2.60.40.60:FF:000275">
    <property type="entry name" value="Si:dkey-30k22.7"/>
    <property type="match status" value="1"/>
</dbReference>
<dbReference type="Gene3D" id="2.60.40.60">
    <property type="entry name" value="Cadherins"/>
    <property type="match status" value="11"/>
</dbReference>
<dbReference type="InterPro" id="IPR002126">
    <property type="entry name" value="Cadherin-like_dom"/>
</dbReference>
<dbReference type="InterPro" id="IPR015919">
    <property type="entry name" value="Cadherin-like_sf"/>
</dbReference>
<dbReference type="InterPro" id="IPR020894">
    <property type="entry name" value="Cadherin_CS"/>
</dbReference>
<dbReference type="InterPro" id="IPR050174">
    <property type="entry name" value="Protocadherin/Cadherin-CA"/>
</dbReference>
<dbReference type="PANTHER" id="PTHR24028">
    <property type="entry name" value="CADHERIN-87A"/>
    <property type="match status" value="1"/>
</dbReference>
<dbReference type="PANTHER" id="PTHR24028:SF263">
    <property type="entry name" value="CADHERIN-RELATED FAMILY MEMBER 1"/>
    <property type="match status" value="1"/>
</dbReference>
<dbReference type="Pfam" id="PF00028">
    <property type="entry name" value="Cadherin"/>
    <property type="match status" value="8"/>
</dbReference>
<dbReference type="PRINTS" id="PR00205">
    <property type="entry name" value="CADHERIN"/>
</dbReference>
<dbReference type="SMART" id="SM00112">
    <property type="entry name" value="CA"/>
    <property type="match status" value="11"/>
</dbReference>
<dbReference type="SUPFAM" id="SSF49313">
    <property type="entry name" value="Cadherin-like"/>
    <property type="match status" value="10"/>
</dbReference>
<dbReference type="PROSITE" id="PS00232">
    <property type="entry name" value="CADHERIN_1"/>
    <property type="match status" value="3"/>
</dbReference>
<dbReference type="PROSITE" id="PS50268">
    <property type="entry name" value="CADHERIN_2"/>
    <property type="match status" value="11"/>
</dbReference>
<gene>
    <name evidence="12 16" type="primary">Cad99C</name>
    <name evidence="16" type="ORF">CG31009</name>
</gene>
<name>CAD99_DROME</name>
<organism evidence="17">
    <name type="scientific">Drosophila melanogaster</name>
    <name type="common">Fruit fly</name>
    <dbReference type="NCBI Taxonomy" id="7227"/>
    <lineage>
        <taxon>Eukaryota</taxon>
        <taxon>Metazoa</taxon>
        <taxon>Ecdysozoa</taxon>
        <taxon>Arthropoda</taxon>
        <taxon>Hexapoda</taxon>
        <taxon>Insecta</taxon>
        <taxon>Pterygota</taxon>
        <taxon>Neoptera</taxon>
        <taxon>Endopterygota</taxon>
        <taxon>Diptera</taxon>
        <taxon>Brachycera</taxon>
        <taxon>Muscomorpha</taxon>
        <taxon>Ephydroidea</taxon>
        <taxon>Drosophilidae</taxon>
        <taxon>Drosophila</taxon>
        <taxon>Sophophora</taxon>
    </lineage>
</organism>
<evidence type="ECO:0000250" key="1">
    <source>
        <dbReference type="UniProtKB" id="P12830"/>
    </source>
</evidence>
<evidence type="ECO:0000255" key="2"/>
<evidence type="ECO:0000255" key="3">
    <source>
        <dbReference type="PROSITE-ProRule" id="PRU00043"/>
    </source>
</evidence>
<evidence type="ECO:0000255" key="4">
    <source>
        <dbReference type="PROSITE-ProRule" id="PRU00498"/>
    </source>
</evidence>
<evidence type="ECO:0000269" key="5">
    <source>
    </source>
</evidence>
<evidence type="ECO:0000269" key="6">
    <source>
    </source>
</evidence>
<evidence type="ECO:0000269" key="7">
    <source>
    </source>
</evidence>
<evidence type="ECO:0000269" key="8">
    <source>
    </source>
</evidence>
<evidence type="ECO:0000269" key="9">
    <source>
    </source>
</evidence>
<evidence type="ECO:0000269" key="10">
    <source>
    </source>
</evidence>
<evidence type="ECO:0000269" key="11">
    <source>
    </source>
</evidence>
<evidence type="ECO:0000303" key="12">
    <source>
    </source>
</evidence>
<evidence type="ECO:0000305" key="13"/>
<evidence type="ECO:0000312" key="14">
    <source>
        <dbReference type="EMBL" id="AAV36944.1"/>
    </source>
</evidence>
<evidence type="ECO:0000312" key="15">
    <source>
        <dbReference type="EMBL" id="AAX12107.1"/>
    </source>
</evidence>
<evidence type="ECO:0000312" key="16">
    <source>
        <dbReference type="FlyBase" id="FBgn0039709"/>
    </source>
</evidence>
<evidence type="ECO:0000312" key="17">
    <source>
        <dbReference type="Proteomes" id="UP000000803"/>
    </source>
</evidence>
<reference evidence="15" key="1">
    <citation type="journal article" date="2005" name="Dev. Biol.">
        <title>Cadherin Cad99C is regulated by Hedgehog signaling in Drosophila.</title>
        <authorList>
            <person name="Schlichting K."/>
            <person name="Demontis F."/>
            <person name="Dahmann C."/>
        </authorList>
    </citation>
    <scope>NUCLEOTIDE SEQUENCE [MRNA]</scope>
    <scope>DEVELOPMENTAL STAGE</scope>
</reference>
<reference evidence="17" key="2">
    <citation type="journal article" date="2000" name="Science">
        <title>The genome sequence of Drosophila melanogaster.</title>
        <authorList>
            <person name="Adams M.D."/>
            <person name="Celniker S.E."/>
            <person name="Holt R.A."/>
            <person name="Evans C.A."/>
            <person name="Gocayne J.D."/>
            <person name="Amanatides P.G."/>
            <person name="Scherer S.E."/>
            <person name="Li P.W."/>
            <person name="Hoskins R.A."/>
            <person name="Galle R.F."/>
            <person name="George R.A."/>
            <person name="Lewis S.E."/>
            <person name="Richards S."/>
            <person name="Ashburner M."/>
            <person name="Henderson S.N."/>
            <person name="Sutton G.G."/>
            <person name="Wortman J.R."/>
            <person name="Yandell M.D."/>
            <person name="Zhang Q."/>
            <person name="Chen L.X."/>
            <person name="Brandon R.C."/>
            <person name="Rogers Y.-H.C."/>
            <person name="Blazej R.G."/>
            <person name="Champe M."/>
            <person name="Pfeiffer B.D."/>
            <person name="Wan K.H."/>
            <person name="Doyle C."/>
            <person name="Baxter E.G."/>
            <person name="Helt G."/>
            <person name="Nelson C.R."/>
            <person name="Miklos G.L.G."/>
            <person name="Abril J.F."/>
            <person name="Agbayani A."/>
            <person name="An H.-J."/>
            <person name="Andrews-Pfannkoch C."/>
            <person name="Baldwin D."/>
            <person name="Ballew R.M."/>
            <person name="Basu A."/>
            <person name="Baxendale J."/>
            <person name="Bayraktaroglu L."/>
            <person name="Beasley E.M."/>
            <person name="Beeson K.Y."/>
            <person name="Benos P.V."/>
            <person name="Berman B.P."/>
            <person name="Bhandari D."/>
            <person name="Bolshakov S."/>
            <person name="Borkova D."/>
            <person name="Botchan M.R."/>
            <person name="Bouck J."/>
            <person name="Brokstein P."/>
            <person name="Brottier P."/>
            <person name="Burtis K.C."/>
            <person name="Busam D.A."/>
            <person name="Butler H."/>
            <person name="Cadieu E."/>
            <person name="Center A."/>
            <person name="Chandra I."/>
            <person name="Cherry J.M."/>
            <person name="Cawley S."/>
            <person name="Dahlke C."/>
            <person name="Davenport L.B."/>
            <person name="Davies P."/>
            <person name="de Pablos B."/>
            <person name="Delcher A."/>
            <person name="Deng Z."/>
            <person name="Mays A.D."/>
            <person name="Dew I."/>
            <person name="Dietz S.M."/>
            <person name="Dodson K."/>
            <person name="Doup L.E."/>
            <person name="Downes M."/>
            <person name="Dugan-Rocha S."/>
            <person name="Dunkov B.C."/>
            <person name="Dunn P."/>
            <person name="Durbin K.J."/>
            <person name="Evangelista C.C."/>
            <person name="Ferraz C."/>
            <person name="Ferriera S."/>
            <person name="Fleischmann W."/>
            <person name="Fosler C."/>
            <person name="Gabrielian A.E."/>
            <person name="Garg N.S."/>
            <person name="Gelbart W.M."/>
            <person name="Glasser K."/>
            <person name="Glodek A."/>
            <person name="Gong F."/>
            <person name="Gorrell J.H."/>
            <person name="Gu Z."/>
            <person name="Guan P."/>
            <person name="Harris M."/>
            <person name="Harris N.L."/>
            <person name="Harvey D.A."/>
            <person name="Heiman T.J."/>
            <person name="Hernandez J.R."/>
            <person name="Houck J."/>
            <person name="Hostin D."/>
            <person name="Houston K.A."/>
            <person name="Howland T.J."/>
            <person name="Wei M.-H."/>
            <person name="Ibegwam C."/>
            <person name="Jalali M."/>
            <person name="Kalush F."/>
            <person name="Karpen G.H."/>
            <person name="Ke Z."/>
            <person name="Kennison J.A."/>
            <person name="Ketchum K.A."/>
            <person name="Kimmel B.E."/>
            <person name="Kodira C.D."/>
            <person name="Kraft C.L."/>
            <person name="Kravitz S."/>
            <person name="Kulp D."/>
            <person name="Lai Z."/>
            <person name="Lasko P."/>
            <person name="Lei Y."/>
            <person name="Levitsky A.A."/>
            <person name="Li J.H."/>
            <person name="Li Z."/>
            <person name="Liang Y."/>
            <person name="Lin X."/>
            <person name="Liu X."/>
            <person name="Mattei B."/>
            <person name="McIntosh T.C."/>
            <person name="McLeod M.P."/>
            <person name="McPherson D."/>
            <person name="Merkulov G."/>
            <person name="Milshina N.V."/>
            <person name="Mobarry C."/>
            <person name="Morris J."/>
            <person name="Moshrefi A."/>
            <person name="Mount S.M."/>
            <person name="Moy M."/>
            <person name="Murphy B."/>
            <person name="Murphy L."/>
            <person name="Muzny D.M."/>
            <person name="Nelson D.L."/>
            <person name="Nelson D.R."/>
            <person name="Nelson K.A."/>
            <person name="Nixon K."/>
            <person name="Nusskern D.R."/>
            <person name="Pacleb J.M."/>
            <person name="Palazzolo M."/>
            <person name="Pittman G.S."/>
            <person name="Pan S."/>
            <person name="Pollard J."/>
            <person name="Puri V."/>
            <person name="Reese M.G."/>
            <person name="Reinert K."/>
            <person name="Remington K."/>
            <person name="Saunders R.D.C."/>
            <person name="Scheeler F."/>
            <person name="Shen H."/>
            <person name="Shue B.C."/>
            <person name="Siden-Kiamos I."/>
            <person name="Simpson M."/>
            <person name="Skupski M.P."/>
            <person name="Smith T.J."/>
            <person name="Spier E."/>
            <person name="Spradling A.C."/>
            <person name="Stapleton M."/>
            <person name="Strong R."/>
            <person name="Sun E."/>
            <person name="Svirskas R."/>
            <person name="Tector C."/>
            <person name="Turner R."/>
            <person name="Venter E."/>
            <person name="Wang A.H."/>
            <person name="Wang X."/>
            <person name="Wang Z.-Y."/>
            <person name="Wassarman D.A."/>
            <person name="Weinstock G.M."/>
            <person name="Weissenbach J."/>
            <person name="Williams S.M."/>
            <person name="Woodage T."/>
            <person name="Worley K.C."/>
            <person name="Wu D."/>
            <person name="Yang S."/>
            <person name="Yao Q.A."/>
            <person name="Ye J."/>
            <person name="Yeh R.-F."/>
            <person name="Zaveri J.S."/>
            <person name="Zhan M."/>
            <person name="Zhang G."/>
            <person name="Zhao Q."/>
            <person name="Zheng L."/>
            <person name="Zheng X.H."/>
            <person name="Zhong F.N."/>
            <person name="Zhong W."/>
            <person name="Zhou X."/>
            <person name="Zhu S.C."/>
            <person name="Zhu X."/>
            <person name="Smith H.O."/>
            <person name="Gibbs R.A."/>
            <person name="Myers E.W."/>
            <person name="Rubin G.M."/>
            <person name="Venter J.C."/>
        </authorList>
    </citation>
    <scope>NUCLEOTIDE SEQUENCE [LARGE SCALE GENOMIC DNA]</scope>
    <source>
        <strain evidence="17">Berkeley</strain>
    </source>
</reference>
<reference evidence="17" key="3">
    <citation type="journal article" date="2002" name="Genome Biol.">
        <title>Annotation of the Drosophila melanogaster euchromatic genome: a systematic review.</title>
        <authorList>
            <person name="Misra S."/>
            <person name="Crosby M.A."/>
            <person name="Mungall C.J."/>
            <person name="Matthews B.B."/>
            <person name="Campbell K.S."/>
            <person name="Hradecky P."/>
            <person name="Huang Y."/>
            <person name="Kaminker J.S."/>
            <person name="Millburn G.H."/>
            <person name="Prochnik S.E."/>
            <person name="Smith C.D."/>
            <person name="Tupy J.L."/>
            <person name="Whitfield E.J."/>
            <person name="Bayraktaroglu L."/>
            <person name="Berman B.P."/>
            <person name="Bettencourt B.R."/>
            <person name="Celniker S.E."/>
            <person name="de Grey A.D.N.J."/>
            <person name="Drysdale R.A."/>
            <person name="Harris N.L."/>
            <person name="Richter J."/>
            <person name="Russo S."/>
            <person name="Schroeder A.J."/>
            <person name="Shu S.Q."/>
            <person name="Stapleton M."/>
            <person name="Yamada C."/>
            <person name="Ashburner M."/>
            <person name="Gelbart W.M."/>
            <person name="Rubin G.M."/>
            <person name="Lewis S.E."/>
        </authorList>
    </citation>
    <scope>GENOME REANNOTATION</scope>
    <source>
        <strain evidence="17">Berkeley</strain>
    </source>
</reference>
<reference evidence="14" key="4">
    <citation type="submission" date="2004-10" db="EMBL/GenBank/DDBJ databases">
        <authorList>
            <person name="Stapleton M."/>
            <person name="Carlson J."/>
            <person name="Chavez C."/>
            <person name="Frise E."/>
            <person name="George R."/>
            <person name="Pacleb J."/>
            <person name="Park S."/>
            <person name="Wan K."/>
            <person name="Yu C."/>
            <person name="Rubin G.M."/>
            <person name="Celniker S."/>
        </authorList>
    </citation>
    <scope>NUCLEOTIDE SEQUENCE [LARGE SCALE MRNA] OF 16-1706</scope>
    <source>
        <strain evidence="14">Berkeley</strain>
    </source>
</reference>
<reference evidence="13" key="5">
    <citation type="journal article" date="2005" name="J. Cell Biol.">
        <title>Drosophila melanogaster Cad99C, the orthologue of human Usher cadherin PCDH15, regulates the length of microvilli.</title>
        <authorList>
            <person name="D'Alterio C."/>
            <person name="Tran D.D."/>
            <person name="Yeung M.W."/>
            <person name="Hwang M.S."/>
            <person name="Li M.A."/>
            <person name="Arana C.J."/>
            <person name="Mulligan V.K."/>
            <person name="Kubesh M."/>
            <person name="Sharma P."/>
            <person name="Chase M."/>
            <person name="Tepass U."/>
            <person name="Godt D."/>
        </authorList>
    </citation>
    <scope>FUNCTION</scope>
    <scope>SUBCELLULAR LOCATION</scope>
    <scope>DEVELOPMENTAL STAGE</scope>
    <scope>DOMAIN</scope>
    <scope>DISRUPTION PHENOTYPE</scope>
</reference>
<reference evidence="13" key="6">
    <citation type="journal article" date="2006" name="J. Cell Sci.">
        <title>Cadherin Cad99C is required for normal microvilli morphology in Drosophila follicle cells.</title>
        <authorList>
            <person name="Schlichting K."/>
            <person name="Wilsch-Braeuninger M."/>
            <person name="Demontis F."/>
            <person name="Dahmann C."/>
        </authorList>
    </citation>
    <scope>FUNCTION</scope>
    <scope>SUBCELLULAR LOCATION</scope>
    <scope>DEVELOPMENTAL STAGE</scope>
    <scope>DOMAIN</scope>
    <scope>DISRUPTION PHENOTYPE</scope>
</reference>
<reference evidence="13" key="7">
    <citation type="journal article" date="2014" name="Development">
        <title>Cadherin 99C regulates apical expansion and cell rearrangement during epithelial tube elongation.</title>
        <authorList>
            <person name="Chung S."/>
            <person name="Andrew D.J."/>
        </authorList>
    </citation>
    <scope>FUNCTION</scope>
    <scope>DEVELOPMENTAL STAGE</scope>
    <scope>DOMAIN</scope>
    <scope>DISRUPTION PHENOTYPE</scope>
</reference>
<reference evidence="13" key="8">
    <citation type="journal article" date="2014" name="J. Cell Sci.">
        <title>Myosin VIIA regulates microvillus morphogenesis and interacts with cadherin Cad99C in Drosophila oogenesis.</title>
        <authorList>
            <person name="Glowinski C."/>
            <person name="Liu R.H."/>
            <person name="Chen X."/>
            <person name="Darabie A."/>
            <person name="Godt D."/>
        </authorList>
    </citation>
    <scope>FUNCTION</scope>
    <scope>INTERACTION WITH CK</scope>
</reference>
<reference evidence="13" key="9">
    <citation type="journal article" date="2015" name="Cell Host Microbe">
        <title>Bacterial uracil modulates Drosophila DUOX-dependent gut immunity via Hedgehog-induced signaling endosomes.</title>
        <authorList>
            <person name="Lee K.A."/>
            <person name="Kim B."/>
            <person name="Bhin J."/>
            <person name="Kim D.H."/>
            <person name="You H."/>
            <person name="Kim E.K."/>
            <person name="Kim S.H."/>
            <person name="Ryu J.H."/>
            <person name="Hwang D."/>
            <person name="Lee W.J."/>
        </authorList>
    </citation>
    <scope>FUNCTION</scope>
    <scope>SUBCELLULAR LOCATION</scope>
    <scope>INDUCTION BY BACTERIAL URACIL</scope>
    <scope>DOMAIN</scope>
    <scope>DISRUPTION PHENOTYPE</scope>
</reference>
<reference key="10">
    <citation type="journal article" date="2016" name="Elife">
        <title>The E3 ligase Ubr3 regulates Usher syndrome and MYH9 disorder proteins in the auditory organs of Drosophila and mammals.</title>
        <authorList>
            <person name="Li T."/>
            <person name="Giagtzoglou N."/>
            <person name="Eberl D.F."/>
            <person name="Jaiswal S.N."/>
            <person name="Cai T."/>
            <person name="Godt D."/>
            <person name="Groves A.K."/>
            <person name="Bellen H.J."/>
        </authorList>
    </citation>
    <scope>INTERACTION WITH CK AND CUL1; UBR3</scope>
</reference>